<protein>
    <recommendedName>
        <fullName evidence="1">Small ribosomal subunit protein uS4</fullName>
    </recommendedName>
    <alternativeName>
        <fullName evidence="3">30S ribosomal protein S4</fullName>
    </alternativeName>
</protein>
<keyword id="KW-1185">Reference proteome</keyword>
<keyword id="KW-0687">Ribonucleoprotein</keyword>
<keyword id="KW-0689">Ribosomal protein</keyword>
<keyword id="KW-0694">RNA-binding</keyword>
<keyword id="KW-0699">rRNA-binding</keyword>
<proteinExistence type="inferred from homology"/>
<gene>
    <name evidence="1" type="primary">rps4</name>
    <name type="ordered locus">Nmar_0324</name>
</gene>
<name>RS4_NITMS</name>
<reference key="1">
    <citation type="journal article" date="2010" name="Proc. Natl. Acad. Sci. U.S.A.">
        <title>Nitrosopumilus maritimus genome reveals unique mechanisms for nitrification and autotrophy in globally distributed marine crenarchaea.</title>
        <authorList>
            <person name="Walker C.B."/>
            <person name="de la Torre J.R."/>
            <person name="Klotz M.G."/>
            <person name="Urakawa H."/>
            <person name="Pinel N."/>
            <person name="Arp D.J."/>
            <person name="Brochier-Armanet C."/>
            <person name="Chain P.S."/>
            <person name="Chan P.P."/>
            <person name="Gollabgir A."/>
            <person name="Hemp J."/>
            <person name="Hugler M."/>
            <person name="Karr E.A."/>
            <person name="Konneke M."/>
            <person name="Shin M."/>
            <person name="Lawton T.J."/>
            <person name="Lowe T."/>
            <person name="Martens-Habbena W."/>
            <person name="Sayavedra-Soto L.A."/>
            <person name="Lang D."/>
            <person name="Sievert S.M."/>
            <person name="Rosenzweig A.C."/>
            <person name="Manning G."/>
            <person name="Stahl D.A."/>
        </authorList>
    </citation>
    <scope>NUCLEOTIDE SEQUENCE [LARGE SCALE GENOMIC DNA]</scope>
    <source>
        <strain>SCM1</strain>
    </source>
</reference>
<accession>A9A436</accession>
<dbReference type="EMBL" id="CP000866">
    <property type="protein sequence ID" value="ABX12220.1"/>
    <property type="molecule type" value="Genomic_DNA"/>
</dbReference>
<dbReference type="RefSeq" id="WP_012214707.1">
    <property type="nucleotide sequence ID" value="NC_010085.1"/>
</dbReference>
<dbReference type="SMR" id="A9A436"/>
<dbReference type="FunCoup" id="A9A436">
    <property type="interactions" value="172"/>
</dbReference>
<dbReference type="STRING" id="436308.Nmar_0324"/>
<dbReference type="EnsemblBacteria" id="ABX12220">
    <property type="protein sequence ID" value="ABX12220"/>
    <property type="gene ID" value="Nmar_0324"/>
</dbReference>
<dbReference type="GeneID" id="5774482"/>
<dbReference type="KEGG" id="nmr:Nmar_0324"/>
<dbReference type="eggNOG" id="arCOG04239">
    <property type="taxonomic scope" value="Archaea"/>
</dbReference>
<dbReference type="HOGENOM" id="CLU_089738_1_1_2"/>
<dbReference type="InParanoid" id="A9A436"/>
<dbReference type="OrthoDB" id="10429at2157"/>
<dbReference type="PhylomeDB" id="A9A436"/>
<dbReference type="Proteomes" id="UP000000792">
    <property type="component" value="Chromosome"/>
</dbReference>
<dbReference type="GO" id="GO:0015935">
    <property type="term" value="C:small ribosomal subunit"/>
    <property type="evidence" value="ECO:0000318"/>
    <property type="project" value="GO_Central"/>
</dbReference>
<dbReference type="GO" id="GO:0019843">
    <property type="term" value="F:rRNA binding"/>
    <property type="evidence" value="ECO:0000318"/>
    <property type="project" value="GO_Central"/>
</dbReference>
<dbReference type="GO" id="GO:0003735">
    <property type="term" value="F:structural constituent of ribosome"/>
    <property type="evidence" value="ECO:0000318"/>
    <property type="project" value="GO_Central"/>
</dbReference>
<dbReference type="GO" id="GO:0042274">
    <property type="term" value="P:ribosomal small subunit biogenesis"/>
    <property type="evidence" value="ECO:0000318"/>
    <property type="project" value="GO_Central"/>
</dbReference>
<dbReference type="GO" id="GO:0006412">
    <property type="term" value="P:translation"/>
    <property type="evidence" value="ECO:0007669"/>
    <property type="project" value="UniProtKB-UniRule"/>
</dbReference>
<dbReference type="CDD" id="cd00165">
    <property type="entry name" value="S4"/>
    <property type="match status" value="1"/>
</dbReference>
<dbReference type="FunFam" id="3.10.290.10:FF:000072">
    <property type="entry name" value="30S ribosomal protein S4"/>
    <property type="match status" value="1"/>
</dbReference>
<dbReference type="Gene3D" id="3.10.290.10">
    <property type="entry name" value="RNA-binding S4 domain"/>
    <property type="match status" value="1"/>
</dbReference>
<dbReference type="HAMAP" id="MF_01306_A">
    <property type="entry name" value="Ribosomal_uS4_A"/>
    <property type="match status" value="1"/>
</dbReference>
<dbReference type="InterPro" id="IPR022801">
    <property type="entry name" value="Ribosomal_uS4"/>
</dbReference>
<dbReference type="InterPro" id="IPR022802">
    <property type="entry name" value="Ribosomal_uS4_arc"/>
</dbReference>
<dbReference type="InterPro" id="IPR005710">
    <property type="entry name" value="Ribosomal_uS4_euk/arc"/>
</dbReference>
<dbReference type="InterPro" id="IPR001912">
    <property type="entry name" value="Ribosomal_uS4_N"/>
</dbReference>
<dbReference type="InterPro" id="IPR002942">
    <property type="entry name" value="S4_RNA-bd"/>
</dbReference>
<dbReference type="InterPro" id="IPR036986">
    <property type="entry name" value="S4_RNA-bd_sf"/>
</dbReference>
<dbReference type="NCBIfam" id="NF003139">
    <property type="entry name" value="PRK04051.1"/>
    <property type="match status" value="1"/>
</dbReference>
<dbReference type="NCBIfam" id="TIGR01018">
    <property type="entry name" value="uS4_arch"/>
    <property type="match status" value="1"/>
</dbReference>
<dbReference type="PANTHER" id="PTHR11831">
    <property type="entry name" value="30S 40S RIBOSOMAL PROTEIN"/>
    <property type="match status" value="1"/>
</dbReference>
<dbReference type="PANTHER" id="PTHR11831:SF5">
    <property type="entry name" value="40S RIBOSOMAL PROTEIN S9"/>
    <property type="match status" value="1"/>
</dbReference>
<dbReference type="Pfam" id="PF00163">
    <property type="entry name" value="Ribosomal_S4"/>
    <property type="match status" value="1"/>
</dbReference>
<dbReference type="Pfam" id="PF01479">
    <property type="entry name" value="S4"/>
    <property type="match status" value="1"/>
</dbReference>
<dbReference type="SMART" id="SM01390">
    <property type="entry name" value="Ribosomal_S4"/>
    <property type="match status" value="1"/>
</dbReference>
<dbReference type="SMART" id="SM00363">
    <property type="entry name" value="S4"/>
    <property type="match status" value="1"/>
</dbReference>
<dbReference type="SUPFAM" id="SSF55174">
    <property type="entry name" value="Alpha-L RNA-binding motif"/>
    <property type="match status" value="1"/>
</dbReference>
<dbReference type="PROSITE" id="PS50889">
    <property type="entry name" value="S4"/>
    <property type="match status" value="1"/>
</dbReference>
<evidence type="ECO:0000255" key="1">
    <source>
        <dbReference type="HAMAP-Rule" id="MF_01306"/>
    </source>
</evidence>
<evidence type="ECO:0000256" key="2">
    <source>
        <dbReference type="SAM" id="MobiDB-lite"/>
    </source>
</evidence>
<evidence type="ECO:0000305" key="3"/>
<comment type="function">
    <text evidence="1">One of the primary rRNA binding proteins, it binds directly to 16S rRNA where it nucleates assembly of the body of the 30S subunit.</text>
</comment>
<comment type="function">
    <text evidence="1">With S5 and S12 plays an important role in translational accuracy.</text>
</comment>
<comment type="subunit">
    <text evidence="1">Part of the 30S ribosomal subunit. Contacts protein S5. The interaction surface between S4 and S5 is involved in control of translational fidelity.</text>
</comment>
<comment type="similarity">
    <text evidence="1">Belongs to the universal ribosomal protein uS4 family.</text>
</comment>
<feature type="chain" id="PRO_1000165417" description="Small ribosomal subunit protein uS4">
    <location>
        <begin position="1"/>
        <end position="201"/>
    </location>
</feature>
<feature type="domain" description="S4 RNA-binding" evidence="1">
    <location>
        <begin position="103"/>
        <end position="167"/>
    </location>
</feature>
<feature type="region of interest" description="Disordered" evidence="2">
    <location>
        <begin position="163"/>
        <end position="201"/>
    </location>
</feature>
<feature type="compositionally biased region" description="Acidic residues" evidence="2">
    <location>
        <begin position="172"/>
        <end position="185"/>
    </location>
</feature>
<feature type="compositionally biased region" description="Basic and acidic residues" evidence="2">
    <location>
        <begin position="189"/>
        <end position="201"/>
    </location>
</feature>
<organism>
    <name type="scientific">Nitrosopumilus maritimus (strain SCM1)</name>
    <dbReference type="NCBI Taxonomy" id="436308"/>
    <lineage>
        <taxon>Archaea</taxon>
        <taxon>Nitrososphaerota</taxon>
        <taxon>Nitrososphaeria</taxon>
        <taxon>Nitrosopumilales</taxon>
        <taxon>Nitrosopumilaceae</taxon>
        <taxon>Nitrosopumilus</taxon>
    </lineage>
</organism>
<sequence>MGDPKYPRRVWRKPKRPLNYELKMEELKTLGTFGLRTKRELWKAHTELSRVRHQARSLLALRQEVRAEKEPILMKSLARIGLVSSDATLDDVLNLTANDLLSRRLQTIVTKKLGFKTPYQARQAVIHGHIMIGERKVDIPSYTVTVEEENSIHFAPESKIPQVLEKTKSEAPAEETVEAPAEETVEAPAEEKKEESPSTES</sequence>